<protein>
    <recommendedName>
        <fullName evidence="1">Ubiquinone/menaquinone biosynthesis C-methyltransferase UbiE</fullName>
        <ecNumber evidence="1">2.1.1.163</ecNumber>
        <ecNumber evidence="1">2.1.1.201</ecNumber>
    </recommendedName>
    <alternativeName>
        <fullName evidence="1">2-methoxy-6-polyprenyl-1,4-benzoquinol methylase</fullName>
    </alternativeName>
    <alternativeName>
        <fullName evidence="1">Demethylmenaquinone methyltransferase</fullName>
    </alternativeName>
</protein>
<accession>B1YWF9</accession>
<evidence type="ECO:0000255" key="1">
    <source>
        <dbReference type="HAMAP-Rule" id="MF_01813"/>
    </source>
</evidence>
<dbReference type="EC" id="2.1.1.163" evidence="1"/>
<dbReference type="EC" id="2.1.1.201" evidence="1"/>
<dbReference type="EMBL" id="CP001025">
    <property type="protein sequence ID" value="ACB65127.1"/>
    <property type="molecule type" value="Genomic_DNA"/>
</dbReference>
<dbReference type="RefSeq" id="WP_011657902.1">
    <property type="nucleotide sequence ID" value="NC_010551.1"/>
</dbReference>
<dbReference type="SMR" id="B1YWF9"/>
<dbReference type="GeneID" id="93085016"/>
<dbReference type="KEGG" id="bac:BamMC406_2650"/>
<dbReference type="HOGENOM" id="CLU_037990_0_0_4"/>
<dbReference type="OrthoDB" id="9808140at2"/>
<dbReference type="UniPathway" id="UPA00079">
    <property type="reaction ID" value="UER00169"/>
</dbReference>
<dbReference type="UniPathway" id="UPA00232"/>
<dbReference type="Proteomes" id="UP000001680">
    <property type="component" value="Chromosome 1"/>
</dbReference>
<dbReference type="GO" id="GO:0008425">
    <property type="term" value="F:2-methoxy-6-polyprenyl-1,4-benzoquinol methyltransferase activity"/>
    <property type="evidence" value="ECO:0007669"/>
    <property type="project" value="UniProtKB-UniRule"/>
</dbReference>
<dbReference type="GO" id="GO:0043770">
    <property type="term" value="F:demethylmenaquinone methyltransferase activity"/>
    <property type="evidence" value="ECO:0007669"/>
    <property type="project" value="UniProtKB-UniRule"/>
</dbReference>
<dbReference type="GO" id="GO:0009060">
    <property type="term" value="P:aerobic respiration"/>
    <property type="evidence" value="ECO:0007669"/>
    <property type="project" value="UniProtKB-UniRule"/>
</dbReference>
<dbReference type="GO" id="GO:0009234">
    <property type="term" value="P:menaquinone biosynthetic process"/>
    <property type="evidence" value="ECO:0007669"/>
    <property type="project" value="UniProtKB-UniRule"/>
</dbReference>
<dbReference type="GO" id="GO:0032259">
    <property type="term" value="P:methylation"/>
    <property type="evidence" value="ECO:0007669"/>
    <property type="project" value="UniProtKB-KW"/>
</dbReference>
<dbReference type="CDD" id="cd02440">
    <property type="entry name" value="AdoMet_MTases"/>
    <property type="match status" value="1"/>
</dbReference>
<dbReference type="Gene3D" id="3.40.50.150">
    <property type="entry name" value="Vaccinia Virus protein VP39"/>
    <property type="match status" value="1"/>
</dbReference>
<dbReference type="HAMAP" id="MF_01813">
    <property type="entry name" value="MenG_UbiE_methyltr"/>
    <property type="match status" value="1"/>
</dbReference>
<dbReference type="InterPro" id="IPR029063">
    <property type="entry name" value="SAM-dependent_MTases_sf"/>
</dbReference>
<dbReference type="InterPro" id="IPR004033">
    <property type="entry name" value="UbiE/COQ5_MeTrFase"/>
</dbReference>
<dbReference type="InterPro" id="IPR023576">
    <property type="entry name" value="UbiE/COQ5_MeTrFase_CS"/>
</dbReference>
<dbReference type="NCBIfam" id="TIGR01934">
    <property type="entry name" value="MenG_MenH_UbiE"/>
    <property type="match status" value="1"/>
</dbReference>
<dbReference type="NCBIfam" id="NF001240">
    <property type="entry name" value="PRK00216.1-1"/>
    <property type="match status" value="1"/>
</dbReference>
<dbReference type="PANTHER" id="PTHR43591:SF24">
    <property type="entry name" value="2-METHOXY-6-POLYPRENYL-1,4-BENZOQUINOL METHYLASE, MITOCHONDRIAL"/>
    <property type="match status" value="1"/>
</dbReference>
<dbReference type="PANTHER" id="PTHR43591">
    <property type="entry name" value="METHYLTRANSFERASE"/>
    <property type="match status" value="1"/>
</dbReference>
<dbReference type="Pfam" id="PF01209">
    <property type="entry name" value="Ubie_methyltran"/>
    <property type="match status" value="1"/>
</dbReference>
<dbReference type="SUPFAM" id="SSF53335">
    <property type="entry name" value="S-adenosyl-L-methionine-dependent methyltransferases"/>
    <property type="match status" value="1"/>
</dbReference>
<dbReference type="PROSITE" id="PS51608">
    <property type="entry name" value="SAM_MT_UBIE"/>
    <property type="match status" value="1"/>
</dbReference>
<dbReference type="PROSITE" id="PS01183">
    <property type="entry name" value="UBIE_1"/>
    <property type="match status" value="1"/>
</dbReference>
<dbReference type="PROSITE" id="PS01184">
    <property type="entry name" value="UBIE_2"/>
    <property type="match status" value="1"/>
</dbReference>
<gene>
    <name evidence="1" type="primary">ubiE</name>
    <name type="ordered locus">BamMC406_2650</name>
</gene>
<name>UBIE_BURA4</name>
<feature type="chain" id="PRO_1000187736" description="Ubiquinone/menaquinone biosynthesis C-methyltransferase UbiE">
    <location>
        <begin position="1"/>
        <end position="243"/>
    </location>
</feature>
<feature type="binding site" evidence="1">
    <location>
        <position position="69"/>
    </location>
    <ligand>
        <name>S-adenosyl-L-methionine</name>
        <dbReference type="ChEBI" id="CHEBI:59789"/>
    </ligand>
</feature>
<feature type="binding site" evidence="1">
    <location>
        <position position="90"/>
    </location>
    <ligand>
        <name>S-adenosyl-L-methionine</name>
        <dbReference type="ChEBI" id="CHEBI:59789"/>
    </ligand>
</feature>
<feature type="binding site" evidence="1">
    <location>
        <begin position="116"/>
        <end position="117"/>
    </location>
    <ligand>
        <name>S-adenosyl-L-methionine</name>
        <dbReference type="ChEBI" id="CHEBI:59789"/>
    </ligand>
</feature>
<organism>
    <name type="scientific">Burkholderia ambifaria (strain MC40-6)</name>
    <dbReference type="NCBI Taxonomy" id="398577"/>
    <lineage>
        <taxon>Bacteria</taxon>
        <taxon>Pseudomonadati</taxon>
        <taxon>Pseudomonadota</taxon>
        <taxon>Betaproteobacteria</taxon>
        <taxon>Burkholderiales</taxon>
        <taxon>Burkholderiaceae</taxon>
        <taxon>Burkholderia</taxon>
        <taxon>Burkholderia cepacia complex</taxon>
    </lineage>
</organism>
<sequence>MSKTHFGFESVEETEKAKKVAGVFHSVASNYDLMNDLMSAGMHRAWKAFTIAQANVRPGFKVLDIAAGTGDLTKSFAKAAGPTGEVWHTDINESMLRVGRDRLLDKGIVTPSLLCDAEKIPFPDNYFDVVTVAFGLRNMTHKDAALAEMRRVTKPGGRVMVLEFSKVWDPLKKAYDLYSFKVLPWLGDKFAKDAESYRYLAESIRMHPDQDTLKTMMEQAGLDAVKYYNLSGGVVALHLGTKY</sequence>
<reference key="1">
    <citation type="submission" date="2008-04" db="EMBL/GenBank/DDBJ databases">
        <title>Complete sequence of chromosome 1 of Burkholderia ambifaria MC40-6.</title>
        <authorList>
            <person name="Copeland A."/>
            <person name="Lucas S."/>
            <person name="Lapidus A."/>
            <person name="Glavina del Rio T."/>
            <person name="Dalin E."/>
            <person name="Tice H."/>
            <person name="Pitluck S."/>
            <person name="Chain P."/>
            <person name="Malfatti S."/>
            <person name="Shin M."/>
            <person name="Vergez L."/>
            <person name="Lang D."/>
            <person name="Schmutz J."/>
            <person name="Larimer F."/>
            <person name="Land M."/>
            <person name="Hauser L."/>
            <person name="Kyrpides N."/>
            <person name="Lykidis A."/>
            <person name="Ramette A."/>
            <person name="Konstantinidis K."/>
            <person name="Tiedje J."/>
            <person name="Richardson P."/>
        </authorList>
    </citation>
    <scope>NUCLEOTIDE SEQUENCE [LARGE SCALE GENOMIC DNA]</scope>
    <source>
        <strain>MC40-6</strain>
    </source>
</reference>
<comment type="function">
    <text evidence="1">Methyltransferase required for the conversion of demethylmenaquinol (DMKH2) to menaquinol (MKH2) and the conversion of 2-polyprenyl-6-methoxy-1,4-benzoquinol (DDMQH2) to 2-polyprenyl-3-methyl-6-methoxy-1,4-benzoquinol (DMQH2).</text>
</comment>
<comment type="catalytic activity">
    <reaction evidence="1">
        <text>a 2-demethylmenaquinol + S-adenosyl-L-methionine = a menaquinol + S-adenosyl-L-homocysteine + H(+)</text>
        <dbReference type="Rhea" id="RHEA:42640"/>
        <dbReference type="Rhea" id="RHEA-COMP:9539"/>
        <dbReference type="Rhea" id="RHEA-COMP:9563"/>
        <dbReference type="ChEBI" id="CHEBI:15378"/>
        <dbReference type="ChEBI" id="CHEBI:18151"/>
        <dbReference type="ChEBI" id="CHEBI:55437"/>
        <dbReference type="ChEBI" id="CHEBI:57856"/>
        <dbReference type="ChEBI" id="CHEBI:59789"/>
        <dbReference type="EC" id="2.1.1.163"/>
    </reaction>
</comment>
<comment type="catalytic activity">
    <reaction evidence="1">
        <text>a 2-methoxy-6-(all-trans-polyprenyl)benzene-1,4-diol + S-adenosyl-L-methionine = a 5-methoxy-2-methyl-3-(all-trans-polyprenyl)benzene-1,4-diol + S-adenosyl-L-homocysteine + H(+)</text>
        <dbReference type="Rhea" id="RHEA:28286"/>
        <dbReference type="Rhea" id="RHEA-COMP:10858"/>
        <dbReference type="Rhea" id="RHEA-COMP:10859"/>
        <dbReference type="ChEBI" id="CHEBI:15378"/>
        <dbReference type="ChEBI" id="CHEBI:57856"/>
        <dbReference type="ChEBI" id="CHEBI:59789"/>
        <dbReference type="ChEBI" id="CHEBI:84166"/>
        <dbReference type="ChEBI" id="CHEBI:84167"/>
        <dbReference type="EC" id="2.1.1.201"/>
    </reaction>
</comment>
<comment type="pathway">
    <text evidence="1">Quinol/quinone metabolism; menaquinone biosynthesis; menaquinol from 1,4-dihydroxy-2-naphthoate: step 2/2.</text>
</comment>
<comment type="pathway">
    <text evidence="1">Cofactor biosynthesis; ubiquinone biosynthesis.</text>
</comment>
<comment type="similarity">
    <text evidence="1">Belongs to the class I-like SAM-binding methyltransferase superfamily. MenG/UbiE family.</text>
</comment>
<keyword id="KW-0474">Menaquinone biosynthesis</keyword>
<keyword id="KW-0489">Methyltransferase</keyword>
<keyword id="KW-0949">S-adenosyl-L-methionine</keyword>
<keyword id="KW-0808">Transferase</keyword>
<keyword id="KW-0831">Ubiquinone biosynthesis</keyword>
<proteinExistence type="inferred from homology"/>